<dbReference type="EC" id="3.4.16.5"/>
<dbReference type="EMBL" id="AB051820">
    <property type="protein sequence ID" value="BAB56108.1"/>
    <property type="molecule type" value="Genomic_DNA"/>
</dbReference>
<dbReference type="EMBL" id="AACD01000094">
    <property type="protein sequence ID" value="EAA62602.1"/>
    <property type="molecule type" value="Genomic_DNA"/>
</dbReference>
<dbReference type="EMBL" id="BN001305">
    <property type="protein sequence ID" value="CBF81902.1"/>
    <property type="molecule type" value="Genomic_DNA"/>
</dbReference>
<dbReference type="PIR" id="JC7666">
    <property type="entry name" value="JC7666"/>
</dbReference>
<dbReference type="RefSeq" id="XP_663046.1">
    <property type="nucleotide sequence ID" value="XM_657954.1"/>
</dbReference>
<dbReference type="SMR" id="Q96VC4"/>
<dbReference type="FunCoup" id="Q96VC4">
    <property type="interactions" value="853"/>
</dbReference>
<dbReference type="STRING" id="227321.Q96VC4"/>
<dbReference type="ESTHER" id="emeni-CBPYA">
    <property type="family name" value="Carboxypeptidase_S10"/>
</dbReference>
<dbReference type="MEROPS" id="S10.001"/>
<dbReference type="GlyCosmos" id="Q96VC4">
    <property type="glycosylation" value="2 sites, No reported glycans"/>
</dbReference>
<dbReference type="EnsemblFungi" id="CBF81902">
    <property type="protein sequence ID" value="CBF81902"/>
    <property type="gene ID" value="ANIA_05442"/>
</dbReference>
<dbReference type="GeneID" id="2871736"/>
<dbReference type="KEGG" id="ani:ANIA_05442"/>
<dbReference type="VEuPathDB" id="FungiDB:AN5442"/>
<dbReference type="eggNOG" id="KOG1282">
    <property type="taxonomic scope" value="Eukaryota"/>
</dbReference>
<dbReference type="HOGENOM" id="CLU_008523_10_4_1"/>
<dbReference type="InParanoid" id="Q96VC4"/>
<dbReference type="OMA" id="GDWMKPF"/>
<dbReference type="OrthoDB" id="443318at2759"/>
<dbReference type="Proteomes" id="UP000000560">
    <property type="component" value="Chromosome V"/>
</dbReference>
<dbReference type="GO" id="GO:0005576">
    <property type="term" value="C:extracellular region"/>
    <property type="evidence" value="ECO:0000314"/>
    <property type="project" value="AspGD"/>
</dbReference>
<dbReference type="GO" id="GO:0000324">
    <property type="term" value="C:fungal-type vacuole"/>
    <property type="evidence" value="ECO:0000318"/>
    <property type="project" value="GO_Central"/>
</dbReference>
<dbReference type="GO" id="GO:0000328">
    <property type="term" value="C:fungal-type vacuole lumen"/>
    <property type="evidence" value="ECO:0000304"/>
    <property type="project" value="UniProtKB"/>
</dbReference>
<dbReference type="GO" id="GO:0004180">
    <property type="term" value="F:carboxypeptidase activity"/>
    <property type="evidence" value="ECO:0000314"/>
    <property type="project" value="AspGD"/>
</dbReference>
<dbReference type="GO" id="GO:0004185">
    <property type="term" value="F:serine-type carboxypeptidase activity"/>
    <property type="evidence" value="ECO:0000315"/>
    <property type="project" value="UniProtKB"/>
</dbReference>
<dbReference type="GO" id="GO:0006508">
    <property type="term" value="P:proteolysis"/>
    <property type="evidence" value="ECO:0007669"/>
    <property type="project" value="UniProtKB-KW"/>
</dbReference>
<dbReference type="FunFam" id="1.10.287.410:FF:000001">
    <property type="entry name" value="Carboxypeptidase Y"/>
    <property type="match status" value="1"/>
</dbReference>
<dbReference type="Gene3D" id="1.10.287.410">
    <property type="match status" value="1"/>
</dbReference>
<dbReference type="Gene3D" id="3.40.50.1820">
    <property type="entry name" value="alpha/beta hydrolase"/>
    <property type="match status" value="1"/>
</dbReference>
<dbReference type="InterPro" id="IPR029058">
    <property type="entry name" value="AB_hydrolase_fold"/>
</dbReference>
<dbReference type="InterPro" id="IPR001563">
    <property type="entry name" value="Peptidase_S10"/>
</dbReference>
<dbReference type="InterPro" id="IPR008442">
    <property type="entry name" value="Propeptide_carboxypepY"/>
</dbReference>
<dbReference type="InterPro" id="IPR018202">
    <property type="entry name" value="Ser_caboxypep_ser_AS"/>
</dbReference>
<dbReference type="PANTHER" id="PTHR11802:SF113">
    <property type="entry name" value="SERINE CARBOXYPEPTIDASE CTSA-4.1"/>
    <property type="match status" value="1"/>
</dbReference>
<dbReference type="PANTHER" id="PTHR11802">
    <property type="entry name" value="SERINE PROTEASE FAMILY S10 SERINE CARBOXYPEPTIDASE"/>
    <property type="match status" value="1"/>
</dbReference>
<dbReference type="Pfam" id="PF05388">
    <property type="entry name" value="Carbpep_Y_N"/>
    <property type="match status" value="1"/>
</dbReference>
<dbReference type="Pfam" id="PF00450">
    <property type="entry name" value="Peptidase_S10"/>
    <property type="match status" value="1"/>
</dbReference>
<dbReference type="PRINTS" id="PR00724">
    <property type="entry name" value="CRBOXYPTASEC"/>
</dbReference>
<dbReference type="SUPFAM" id="SSF53474">
    <property type="entry name" value="alpha/beta-Hydrolases"/>
    <property type="match status" value="1"/>
</dbReference>
<dbReference type="PROSITE" id="PS00131">
    <property type="entry name" value="CARBOXYPEPT_SER_SER"/>
    <property type="match status" value="1"/>
</dbReference>
<comment type="function">
    <text evidence="1">Vacuolar carboxypeptidase involved in degradation of small peptides. Digests preferentially peptides containing an aliphatic or hydrophobic residue in P1' position, as well as methionine, leucine or phenylalanine in P1 position of ester substrate (By similarity).</text>
</comment>
<comment type="catalytic activity">
    <reaction evidence="3">
        <text>Release of a C-terminal amino acid with broad specificity.</text>
        <dbReference type="EC" id="3.4.16.5"/>
    </reaction>
</comment>
<comment type="subcellular location">
    <subcellularLocation>
        <location evidence="4">Vacuole</location>
    </subcellularLocation>
</comment>
<comment type="disruption phenotype">
    <text evidence="4">Decreases strongly intracellular carboxypeptidase activity.</text>
</comment>
<comment type="similarity">
    <text evidence="5">Belongs to the peptidase S10 family.</text>
</comment>
<keyword id="KW-0121">Carboxypeptidase</keyword>
<keyword id="KW-1015">Disulfide bond</keyword>
<keyword id="KW-0325">Glycoprotein</keyword>
<keyword id="KW-0378">Hydrolase</keyword>
<keyword id="KW-0645">Protease</keyword>
<keyword id="KW-1185">Reference proteome</keyword>
<keyword id="KW-0732">Signal</keyword>
<keyword id="KW-0926">Vacuole</keyword>
<keyword id="KW-0865">Zymogen</keyword>
<proteinExistence type="inferred from homology"/>
<evidence type="ECO:0000250" key="1"/>
<evidence type="ECO:0000255" key="2"/>
<evidence type="ECO:0000255" key="3">
    <source>
        <dbReference type="PROSITE-ProRule" id="PRU10074"/>
    </source>
</evidence>
<evidence type="ECO:0000269" key="4">
    <source>
    </source>
</evidence>
<evidence type="ECO:0000305" key="5"/>
<feature type="signal peptide" evidence="2">
    <location>
        <begin position="1"/>
        <end position="17"/>
    </location>
</feature>
<feature type="propeptide" id="PRO_0000407449" evidence="1">
    <location>
        <begin position="18"/>
        <end position="133"/>
    </location>
</feature>
<feature type="chain" id="PRO_0000407450" description="Carboxypeptidase Y homolog A">
    <location>
        <begin position="134"/>
        <end position="552"/>
    </location>
</feature>
<feature type="active site" evidence="3">
    <location>
        <position position="275"/>
    </location>
</feature>
<feature type="active site" evidence="3">
    <location>
        <position position="467"/>
    </location>
</feature>
<feature type="active site" evidence="3">
    <location>
        <position position="529"/>
    </location>
</feature>
<feature type="glycosylation site" description="N-linked (GlcNAc...) asparagine" evidence="2">
    <location>
        <position position="219"/>
    </location>
</feature>
<feature type="glycosylation site" description="N-linked (GlcNAc...) asparagine" evidence="2">
    <location>
        <position position="518"/>
    </location>
</feature>
<feature type="disulfide bond" evidence="1">
    <location>
        <begin position="188"/>
        <end position="428"/>
    </location>
</feature>
<feature type="disulfide bond" evidence="1">
    <location>
        <begin position="322"/>
        <end position="336"/>
    </location>
</feature>
<feature type="disulfide bond" evidence="1">
    <location>
        <begin position="346"/>
        <end position="369"/>
    </location>
</feature>
<feature type="disulfide bond" evidence="1">
    <location>
        <begin position="353"/>
        <end position="362"/>
    </location>
</feature>
<feature type="disulfide bond" evidence="1">
    <location>
        <begin position="391"/>
        <end position="398"/>
    </location>
</feature>
<gene>
    <name type="primary">cpyA</name>
    <name type="ORF">AN5442.2</name>
</gene>
<organism>
    <name type="scientific">Emericella nidulans (strain FGSC A4 / ATCC 38163 / CBS 112.46 / NRRL 194 / M139)</name>
    <name type="common">Aspergillus nidulans</name>
    <dbReference type="NCBI Taxonomy" id="227321"/>
    <lineage>
        <taxon>Eukaryota</taxon>
        <taxon>Fungi</taxon>
        <taxon>Dikarya</taxon>
        <taxon>Ascomycota</taxon>
        <taxon>Pezizomycotina</taxon>
        <taxon>Eurotiomycetes</taxon>
        <taxon>Eurotiomycetidae</taxon>
        <taxon>Eurotiales</taxon>
        <taxon>Aspergillaceae</taxon>
        <taxon>Aspergillus</taxon>
        <taxon>Aspergillus subgen. Nidulantes</taxon>
    </lineage>
</organism>
<sequence>MRVLPATLLVGAATAATPAQQVLGGLQDFGNAVQDAMHENLPKINKPLEAFQEQLKSLYEAREFWEEVANAFPQNLDHNPVFSLPKKHTRRPDSHWDHIVRGADVQSVWVTGENGEKEREIEGKLEAYDLRIKKTDPSSLGIDPDVKQYTGYLDDNENDKHLFYWFFESRNDPKNDPVVLWLNGGPGCSSLTGLFMELGPSSIDENIKPVYNPYAWNSNASVIFLDQPVNVGYSYSGSTVSDTVAAGKDVYALLTLFFKQFPEYAEQDFHIAGESYAGHYIPVFTSEILSHQKRNINLKSVLIGNGLTDGLTQYEYYRPMACGEGGYPAVLDESSCRSMDNALGRCQSMIESCYNSESAWVCVPASIYCNNALLAPYQRTGQNVYDVRGKCEDESNLCYKGMGYVSEYLNKPEVRAAVGAEVDGYDSCNFDINRNFLFHGDWMKPYHRLVPGILEQIPVLIYAGDADFICNWLGNKAWTEALEWPGHKEFAAAPMEDLKIVDNEHTGKKIGQIKTHGNFTFMRLYGGGHMVPMDQPEASLEFFNRWLGGEWF</sequence>
<reference key="1">
    <citation type="journal article" date="2001" name="Biosci. Biotechnol. Biochem.">
        <title>Cloning and characterization of the cpyA gene encoding intracellular carboxypeptidase from Aspergillus nidulans.</title>
        <authorList>
            <person name="Ohsumi K."/>
            <person name="Matsuda Y."/>
            <person name="Nakajima H."/>
            <person name="Kitamoto K."/>
        </authorList>
    </citation>
    <scope>NUCLEOTIDE SEQUENCE [GENOMIC DNA]</scope>
    <scope>SUBCELLULAR LOCATION</scope>
    <scope>DISRUPTION PHENOTYPE</scope>
    <source>
        <strain>A26</strain>
    </source>
</reference>
<reference key="2">
    <citation type="journal article" date="2005" name="Nature">
        <title>Sequencing of Aspergillus nidulans and comparative analysis with A. fumigatus and A. oryzae.</title>
        <authorList>
            <person name="Galagan J.E."/>
            <person name="Calvo S.E."/>
            <person name="Cuomo C."/>
            <person name="Ma L.-J."/>
            <person name="Wortman J.R."/>
            <person name="Batzoglou S."/>
            <person name="Lee S.-I."/>
            <person name="Bastuerkmen M."/>
            <person name="Spevak C.C."/>
            <person name="Clutterbuck J."/>
            <person name="Kapitonov V."/>
            <person name="Jurka J."/>
            <person name="Scazzocchio C."/>
            <person name="Farman M.L."/>
            <person name="Butler J."/>
            <person name="Purcell S."/>
            <person name="Harris S."/>
            <person name="Braus G.H."/>
            <person name="Draht O."/>
            <person name="Busch S."/>
            <person name="D'Enfert C."/>
            <person name="Bouchier C."/>
            <person name="Goldman G.H."/>
            <person name="Bell-Pedersen D."/>
            <person name="Griffiths-Jones S."/>
            <person name="Doonan J.H."/>
            <person name="Yu J."/>
            <person name="Vienken K."/>
            <person name="Pain A."/>
            <person name="Freitag M."/>
            <person name="Selker E.U."/>
            <person name="Archer D.B."/>
            <person name="Penalva M.A."/>
            <person name="Oakley B.R."/>
            <person name="Momany M."/>
            <person name="Tanaka T."/>
            <person name="Kumagai T."/>
            <person name="Asai K."/>
            <person name="Machida M."/>
            <person name="Nierman W.C."/>
            <person name="Denning D.W."/>
            <person name="Caddick M.X."/>
            <person name="Hynes M."/>
            <person name="Paoletti M."/>
            <person name="Fischer R."/>
            <person name="Miller B.L."/>
            <person name="Dyer P.S."/>
            <person name="Sachs M.S."/>
            <person name="Osmani S.A."/>
            <person name="Birren B.W."/>
        </authorList>
    </citation>
    <scope>NUCLEOTIDE SEQUENCE [LARGE SCALE GENOMIC DNA]</scope>
    <source>
        <strain>FGSC A4 / ATCC 38163 / CBS 112.46 / NRRL 194 / M139</strain>
    </source>
</reference>
<reference key="3">
    <citation type="journal article" date="2009" name="Fungal Genet. Biol.">
        <title>The 2008 update of the Aspergillus nidulans genome annotation: a community effort.</title>
        <authorList>
            <person name="Wortman J.R."/>
            <person name="Gilsenan J.M."/>
            <person name="Joardar V."/>
            <person name="Deegan J."/>
            <person name="Clutterbuck J."/>
            <person name="Andersen M.R."/>
            <person name="Archer D."/>
            <person name="Bencina M."/>
            <person name="Braus G."/>
            <person name="Coutinho P."/>
            <person name="von Dohren H."/>
            <person name="Doonan J."/>
            <person name="Driessen A.J."/>
            <person name="Durek P."/>
            <person name="Espeso E."/>
            <person name="Fekete E."/>
            <person name="Flipphi M."/>
            <person name="Estrada C.G."/>
            <person name="Geysens S."/>
            <person name="Goldman G."/>
            <person name="de Groot P.W."/>
            <person name="Hansen K."/>
            <person name="Harris S.D."/>
            <person name="Heinekamp T."/>
            <person name="Helmstaedt K."/>
            <person name="Henrissat B."/>
            <person name="Hofmann G."/>
            <person name="Homan T."/>
            <person name="Horio T."/>
            <person name="Horiuchi H."/>
            <person name="James S."/>
            <person name="Jones M."/>
            <person name="Karaffa L."/>
            <person name="Karanyi Z."/>
            <person name="Kato M."/>
            <person name="Keller N."/>
            <person name="Kelly D.E."/>
            <person name="Kiel J.A."/>
            <person name="Kim J.M."/>
            <person name="van der Klei I.J."/>
            <person name="Klis F.M."/>
            <person name="Kovalchuk A."/>
            <person name="Krasevec N."/>
            <person name="Kubicek C.P."/>
            <person name="Liu B."/>
            <person name="Maccabe A."/>
            <person name="Meyer V."/>
            <person name="Mirabito P."/>
            <person name="Miskei M."/>
            <person name="Mos M."/>
            <person name="Mullins J."/>
            <person name="Nelson D.R."/>
            <person name="Nielsen J."/>
            <person name="Oakley B.R."/>
            <person name="Osmani S.A."/>
            <person name="Pakula T."/>
            <person name="Paszewski A."/>
            <person name="Paulsen I."/>
            <person name="Pilsyk S."/>
            <person name="Pocsi I."/>
            <person name="Punt P.J."/>
            <person name="Ram A.F."/>
            <person name="Ren Q."/>
            <person name="Robellet X."/>
            <person name="Robson G."/>
            <person name="Seiboth B."/>
            <person name="van Solingen P."/>
            <person name="Specht T."/>
            <person name="Sun J."/>
            <person name="Taheri-Talesh N."/>
            <person name="Takeshita N."/>
            <person name="Ussery D."/>
            <person name="vanKuyk P.A."/>
            <person name="Visser H."/>
            <person name="van de Vondervoort P.J."/>
            <person name="de Vries R.P."/>
            <person name="Walton J."/>
            <person name="Xiang X."/>
            <person name="Xiong Y."/>
            <person name="Zeng A.P."/>
            <person name="Brandt B.W."/>
            <person name="Cornell M.J."/>
            <person name="van den Hondel C.A."/>
            <person name="Visser J."/>
            <person name="Oliver S.G."/>
            <person name="Turner G."/>
        </authorList>
    </citation>
    <scope>GENOME REANNOTATION</scope>
    <source>
        <strain>FGSC A4 / ATCC 38163 / CBS 112.46 / NRRL 194 / M139</strain>
    </source>
</reference>
<protein>
    <recommendedName>
        <fullName>Carboxypeptidase Y homolog A</fullName>
        <ecNumber>3.4.16.5</ecNumber>
    </recommendedName>
</protein>
<name>CBPYA_EMENI</name>
<accession>Q96VC4</accession>
<accession>C8VGH8</accession>
<accession>Q5B1Y8</accession>